<name>NU2M_AILME</name>
<comment type="function">
    <text evidence="1">Core subunit of the mitochondrial membrane respiratory chain NADH dehydrogenase (Complex I) which catalyzes electron transfer from NADH through the respiratory chain, using ubiquinone as an electron acceptor. Essential for the catalytic activity and assembly of complex I.</text>
</comment>
<comment type="catalytic activity">
    <reaction evidence="1">
        <text>a ubiquinone + NADH + 5 H(+)(in) = a ubiquinol + NAD(+) + 4 H(+)(out)</text>
        <dbReference type="Rhea" id="RHEA:29091"/>
        <dbReference type="Rhea" id="RHEA-COMP:9565"/>
        <dbReference type="Rhea" id="RHEA-COMP:9566"/>
        <dbReference type="ChEBI" id="CHEBI:15378"/>
        <dbReference type="ChEBI" id="CHEBI:16389"/>
        <dbReference type="ChEBI" id="CHEBI:17976"/>
        <dbReference type="ChEBI" id="CHEBI:57540"/>
        <dbReference type="ChEBI" id="CHEBI:57945"/>
        <dbReference type="EC" id="7.1.1.2"/>
    </reaction>
</comment>
<comment type="subunit">
    <text evidence="1 2">Core subunit of respiratory chain NADH dehydrogenase (Complex I) which is composed of 45 different subunits. Interacts with TMEM242 (By similarity).</text>
</comment>
<comment type="subcellular location">
    <subcellularLocation>
        <location evidence="2">Mitochondrion inner membrane</location>
        <topology evidence="3">Multi-pass membrane protein</topology>
    </subcellularLocation>
</comment>
<comment type="similarity">
    <text evidence="4">Belongs to the complex I subunit 2 family.</text>
</comment>
<sequence length="347" mass="38755">MKPAILITITSTVVLGTMIVLFSSHWFMIWVGFEMNMLAIIPILMKKYNPRAMEASTKYFLTQATASMLLMLSIIINLLCSGHWTVSTIPNPVASTMITIALTMKLGLSPFHFWVPEVTQGISLSSGMILLTWQKIAPLSILYQISPSVNSNLLLMMAITSMLVGGWGGLNQTQLRKILAYSSITHMGWMAAIMVYNPTLAILNLTIYIMMTLGTFMLFMHSSSTTTLSLSYTWNKFPLMAPLILMLMLSLGGLPPLSGFIPKWMIIQELTKNDMIIMPTLMAITALLNLYFYTRLTYTTALTMFPATNNMKMKWQFETTKKTTLLAPLIVTSTMLLPLTPMLAALD</sequence>
<keyword id="KW-0249">Electron transport</keyword>
<keyword id="KW-0472">Membrane</keyword>
<keyword id="KW-0496">Mitochondrion</keyword>
<keyword id="KW-0999">Mitochondrion inner membrane</keyword>
<keyword id="KW-0520">NAD</keyword>
<keyword id="KW-1185">Reference proteome</keyword>
<keyword id="KW-0679">Respiratory chain</keyword>
<keyword id="KW-1278">Translocase</keyword>
<keyword id="KW-0812">Transmembrane</keyword>
<keyword id="KW-1133">Transmembrane helix</keyword>
<keyword id="KW-0813">Transport</keyword>
<keyword id="KW-0830">Ubiquinone</keyword>
<proteinExistence type="inferred from homology"/>
<feature type="chain" id="PRO_0000117539" description="NADH-ubiquinone oxidoreductase chain 2">
    <location>
        <begin position="1"/>
        <end position="347"/>
    </location>
</feature>
<feature type="transmembrane region" description="Helical" evidence="3">
    <location>
        <begin position="5"/>
        <end position="22"/>
    </location>
</feature>
<feature type="transmembrane region" description="Helical" evidence="3">
    <location>
        <begin position="26"/>
        <end position="45"/>
    </location>
</feature>
<feature type="transmembrane region" description="Helical" evidence="3">
    <location>
        <begin position="60"/>
        <end position="80"/>
    </location>
</feature>
<feature type="transmembrane region" description="Helical" evidence="3">
    <location>
        <begin position="96"/>
        <end position="116"/>
    </location>
</feature>
<feature type="transmembrane region" description="Helical" evidence="3">
    <location>
        <begin position="122"/>
        <end position="142"/>
    </location>
</feature>
<feature type="transmembrane region" description="Helical" evidence="3">
    <location>
        <begin position="153"/>
        <end position="173"/>
    </location>
</feature>
<feature type="transmembrane region" description="Helical" evidence="3">
    <location>
        <begin position="178"/>
        <end position="198"/>
    </location>
</feature>
<feature type="transmembrane region" description="Helical" evidence="3">
    <location>
        <begin position="200"/>
        <end position="220"/>
    </location>
</feature>
<feature type="transmembrane region" description="Helical" evidence="3">
    <location>
        <begin position="237"/>
        <end position="257"/>
    </location>
</feature>
<feature type="transmembrane region" description="Helical" evidence="3">
    <location>
        <begin position="274"/>
        <end position="294"/>
    </location>
</feature>
<feature type="transmembrane region" description="Helical" evidence="3">
    <location>
        <begin position="325"/>
        <end position="345"/>
    </location>
</feature>
<feature type="sequence conflict" description="In Ref. 1; AAW83866." evidence="4" ref="1">
    <original>T</original>
    <variation>M</variation>
    <location>
        <position position="10"/>
    </location>
</feature>
<feature type="sequence conflict" description="In Ref. 1; AAW83866." evidence="4" ref="1">
    <original>E</original>
    <variation>K</variation>
    <location>
        <position position="318"/>
    </location>
</feature>
<reference key="1">
    <citation type="journal article" date="2005" name="Syst. Biol.">
        <title>Molecular phylogeny of the Carnivora (Mammalia): assessing the impact of increased sampling on resolving enigmatic relationships.</title>
        <authorList>
            <person name="Flynn J.J."/>
            <person name="Finarelli J.A."/>
            <person name="Zehr S."/>
            <person name="Hsu J."/>
            <person name="Nedbal M.A."/>
        </authorList>
    </citation>
    <scope>NUCLEOTIDE SEQUENCE [GENOMIC DNA]</scope>
</reference>
<reference key="2">
    <citation type="journal article" date="2007" name="Gene">
        <title>The complete mitochondrial genome and phylogenetic analysis of the giant panda (Ailuropoda melanoleuca).</title>
        <authorList>
            <person name="Peng R."/>
            <person name="Zeng B."/>
            <person name="Meng X."/>
            <person name="Yue B."/>
            <person name="Zhang Z."/>
            <person name="Zou F."/>
        </authorList>
    </citation>
    <scope>NUCLEOTIDE SEQUENCE [LARGE SCALE GENOMIC DNA]</scope>
</reference>
<organism>
    <name type="scientific">Ailuropoda melanoleuca</name>
    <name type="common">Giant panda</name>
    <dbReference type="NCBI Taxonomy" id="9646"/>
    <lineage>
        <taxon>Eukaryota</taxon>
        <taxon>Metazoa</taxon>
        <taxon>Chordata</taxon>
        <taxon>Craniata</taxon>
        <taxon>Vertebrata</taxon>
        <taxon>Euteleostomi</taxon>
        <taxon>Mammalia</taxon>
        <taxon>Eutheria</taxon>
        <taxon>Laurasiatheria</taxon>
        <taxon>Carnivora</taxon>
        <taxon>Caniformia</taxon>
        <taxon>Ursidae</taxon>
        <taxon>Ailuropoda</taxon>
    </lineage>
</organism>
<accession>Q534B1</accession>
<accession>A5JFJ7</accession>
<dbReference type="EC" id="7.1.1.2" evidence="1"/>
<dbReference type="EMBL" id="AY750642">
    <property type="protein sequence ID" value="AAW83866.1"/>
    <property type="molecule type" value="Genomic_DNA"/>
</dbReference>
<dbReference type="EMBL" id="EF212882">
    <property type="protein sequence ID" value="ABP38211.1"/>
    <property type="molecule type" value="Genomic_DNA"/>
</dbReference>
<dbReference type="RefSeq" id="YP_001249285.1">
    <property type="nucleotide sequence ID" value="NC_009492.1"/>
</dbReference>
<dbReference type="SMR" id="Q534B1"/>
<dbReference type="FunCoup" id="Q534B1">
    <property type="interactions" value="9"/>
</dbReference>
<dbReference type="STRING" id="9646.ENSAMEP00000021354"/>
<dbReference type="GeneID" id="5179725"/>
<dbReference type="KEGG" id="aml:5179725"/>
<dbReference type="CTD" id="4536"/>
<dbReference type="eggNOG" id="KOG4668">
    <property type="taxonomic scope" value="Eukaryota"/>
</dbReference>
<dbReference type="HOGENOM" id="CLU_007100_1_3_1"/>
<dbReference type="InParanoid" id="Q534B1"/>
<dbReference type="OMA" id="HFWVPEV"/>
<dbReference type="OrthoDB" id="4092844at2759"/>
<dbReference type="TreeFam" id="TF343996"/>
<dbReference type="Proteomes" id="UP000008912">
    <property type="component" value="Mitochondrion"/>
</dbReference>
<dbReference type="GO" id="GO:0005743">
    <property type="term" value="C:mitochondrial inner membrane"/>
    <property type="evidence" value="ECO:0000250"/>
    <property type="project" value="UniProtKB"/>
</dbReference>
<dbReference type="GO" id="GO:0008137">
    <property type="term" value="F:NADH dehydrogenase (ubiquinone) activity"/>
    <property type="evidence" value="ECO:0000250"/>
    <property type="project" value="UniProtKB"/>
</dbReference>
<dbReference type="GO" id="GO:0006120">
    <property type="term" value="P:mitochondrial electron transport, NADH to ubiquinone"/>
    <property type="evidence" value="ECO:0000250"/>
    <property type="project" value="UniProtKB"/>
</dbReference>
<dbReference type="GO" id="GO:0032981">
    <property type="term" value="P:mitochondrial respiratory chain complex I assembly"/>
    <property type="evidence" value="ECO:0000250"/>
    <property type="project" value="UniProtKB"/>
</dbReference>
<dbReference type="InterPro" id="IPR050175">
    <property type="entry name" value="Complex_I_Subunit_2"/>
</dbReference>
<dbReference type="InterPro" id="IPR010933">
    <property type="entry name" value="NADH_DH_su2_C"/>
</dbReference>
<dbReference type="InterPro" id="IPR003917">
    <property type="entry name" value="NADH_UbQ_OxRdtase_chain2"/>
</dbReference>
<dbReference type="InterPro" id="IPR001750">
    <property type="entry name" value="ND/Mrp_TM"/>
</dbReference>
<dbReference type="PANTHER" id="PTHR46552">
    <property type="entry name" value="NADH-UBIQUINONE OXIDOREDUCTASE CHAIN 2"/>
    <property type="match status" value="1"/>
</dbReference>
<dbReference type="PANTHER" id="PTHR46552:SF1">
    <property type="entry name" value="NADH-UBIQUINONE OXIDOREDUCTASE CHAIN 2"/>
    <property type="match status" value="1"/>
</dbReference>
<dbReference type="Pfam" id="PF06444">
    <property type="entry name" value="NADH_dehy_S2_C"/>
    <property type="match status" value="1"/>
</dbReference>
<dbReference type="Pfam" id="PF00361">
    <property type="entry name" value="Proton_antipo_M"/>
    <property type="match status" value="1"/>
</dbReference>
<dbReference type="PRINTS" id="PR01436">
    <property type="entry name" value="NADHDHGNASE2"/>
</dbReference>
<geneLocation type="mitochondrion"/>
<evidence type="ECO:0000250" key="1">
    <source>
        <dbReference type="UniProtKB" id="P03891"/>
    </source>
</evidence>
<evidence type="ECO:0000250" key="2">
    <source>
        <dbReference type="UniProtKB" id="P03892"/>
    </source>
</evidence>
<evidence type="ECO:0000255" key="3"/>
<evidence type="ECO:0000305" key="4"/>
<gene>
    <name evidence="1" type="primary">MT-ND2</name>
    <name type="synonym">MTND2</name>
    <name type="synonym">NADH2</name>
    <name type="synonym">ND2</name>
</gene>
<protein>
    <recommendedName>
        <fullName evidence="1">NADH-ubiquinone oxidoreductase chain 2</fullName>
        <ecNumber evidence="1">7.1.1.2</ecNumber>
    </recommendedName>
    <alternativeName>
        <fullName>NADH dehydrogenase subunit 2</fullName>
    </alternativeName>
</protein>